<name>CLF1_CRYNB</name>
<feature type="chain" id="PRO_0000410110" description="Pre-mRNA-splicing factor CLF1">
    <location>
        <begin position="1"/>
        <end position="726"/>
    </location>
</feature>
<feature type="repeat" description="HAT 1">
    <location>
        <begin position="55"/>
        <end position="87"/>
    </location>
</feature>
<feature type="repeat" description="HAT 2">
    <location>
        <begin position="89"/>
        <end position="121"/>
    </location>
</feature>
<feature type="repeat" description="HAT 3">
    <location>
        <begin position="123"/>
        <end position="155"/>
    </location>
</feature>
<feature type="repeat" description="HAT 4">
    <location>
        <begin position="157"/>
        <end position="188"/>
    </location>
</feature>
<feature type="repeat" description="HAT 5">
    <location>
        <begin position="190"/>
        <end position="221"/>
    </location>
</feature>
<feature type="repeat" description="HAT 6">
    <location>
        <begin position="223"/>
        <end position="262"/>
    </location>
</feature>
<feature type="repeat" description="HAT 7">
    <location>
        <begin position="264"/>
        <end position="298"/>
    </location>
</feature>
<feature type="repeat" description="HAT 8">
    <location>
        <begin position="308"/>
        <end position="340"/>
    </location>
</feature>
<feature type="repeat" description="HAT 9">
    <location>
        <begin position="352"/>
        <end position="386"/>
    </location>
</feature>
<feature type="repeat" description="HAT 10">
    <location>
        <begin position="396"/>
        <end position="432"/>
    </location>
</feature>
<feature type="repeat" description="HAT 11">
    <location>
        <begin position="434"/>
        <end position="465"/>
    </location>
</feature>
<feature type="repeat" description="HAT 12">
    <location>
        <begin position="467"/>
        <end position="499"/>
    </location>
</feature>
<feature type="repeat" description="HAT 13">
    <location>
        <begin position="501"/>
        <end position="534"/>
    </location>
</feature>
<feature type="repeat" description="HAT 14">
    <location>
        <begin position="536"/>
        <end position="567"/>
    </location>
</feature>
<feature type="repeat" description="HAT 15">
    <location>
        <begin position="585"/>
        <end position="626"/>
    </location>
</feature>
<feature type="repeat" description="HAT 16">
    <location>
        <begin position="635"/>
        <end position="667"/>
    </location>
</feature>
<feature type="region of interest" description="Disordered" evidence="2">
    <location>
        <begin position="682"/>
        <end position="726"/>
    </location>
</feature>
<feature type="compositionally biased region" description="Acidic residues" evidence="2">
    <location>
        <begin position="702"/>
        <end position="726"/>
    </location>
</feature>
<dbReference type="EMBL" id="AAEY01000005">
    <property type="protein sequence ID" value="EAL22885.1"/>
    <property type="molecule type" value="Genomic_DNA"/>
</dbReference>
<dbReference type="RefSeq" id="XP_777532.1">
    <property type="nucleotide sequence ID" value="XM_772439.1"/>
</dbReference>
<dbReference type="SMR" id="P0CO11"/>
<dbReference type="EnsemblFungi" id="AAW41086">
    <property type="protein sequence ID" value="AAW41086"/>
    <property type="gene ID" value="CNA06730"/>
</dbReference>
<dbReference type="GeneID" id="4933919"/>
<dbReference type="KEGG" id="cnb:CNBA6540"/>
<dbReference type="VEuPathDB" id="FungiDB:CNBA6540"/>
<dbReference type="HOGENOM" id="CLU_011554_1_0_1"/>
<dbReference type="OrthoDB" id="5453at5206"/>
<dbReference type="GO" id="GO:0071014">
    <property type="term" value="C:post-mRNA release spliceosomal complex"/>
    <property type="evidence" value="ECO:0007669"/>
    <property type="project" value="TreeGrafter"/>
</dbReference>
<dbReference type="GO" id="GO:0071011">
    <property type="term" value="C:precatalytic spliceosome"/>
    <property type="evidence" value="ECO:0007669"/>
    <property type="project" value="TreeGrafter"/>
</dbReference>
<dbReference type="GO" id="GO:0000974">
    <property type="term" value="C:Prp19 complex"/>
    <property type="evidence" value="ECO:0007669"/>
    <property type="project" value="TreeGrafter"/>
</dbReference>
<dbReference type="GO" id="GO:0071007">
    <property type="term" value="C:U2-type catalytic step 2 spliceosome"/>
    <property type="evidence" value="ECO:0007669"/>
    <property type="project" value="TreeGrafter"/>
</dbReference>
<dbReference type="GO" id="GO:0000245">
    <property type="term" value="P:spliceosomal complex assembly"/>
    <property type="evidence" value="ECO:0007669"/>
    <property type="project" value="TreeGrafter"/>
</dbReference>
<dbReference type="FunFam" id="1.25.40.10:FF:000327">
    <property type="entry name" value="Pre-mRNA-splicing factor CLF1"/>
    <property type="match status" value="1"/>
</dbReference>
<dbReference type="FunFam" id="1.25.40.10:FF:000639">
    <property type="entry name" value="Pre-mRNA-splicing factor CLF1"/>
    <property type="match status" value="1"/>
</dbReference>
<dbReference type="Gene3D" id="1.25.40.10">
    <property type="entry name" value="Tetratricopeptide repeat domain"/>
    <property type="match status" value="2"/>
</dbReference>
<dbReference type="InterPro" id="IPR003107">
    <property type="entry name" value="HAT"/>
</dbReference>
<dbReference type="InterPro" id="IPR055433">
    <property type="entry name" value="HAT_Syf1-like_N"/>
</dbReference>
<dbReference type="InterPro" id="IPR055430">
    <property type="entry name" value="HAT_Syf1_CNRKL1_C"/>
</dbReference>
<dbReference type="InterPro" id="IPR045075">
    <property type="entry name" value="Syf1-like"/>
</dbReference>
<dbReference type="InterPro" id="IPR011990">
    <property type="entry name" value="TPR-like_helical_dom_sf"/>
</dbReference>
<dbReference type="InterPro" id="IPR019734">
    <property type="entry name" value="TPR_rpt"/>
</dbReference>
<dbReference type="PANTHER" id="PTHR11246:SF3">
    <property type="entry name" value="CROOKED NECK-LIKE PROTEIN 1"/>
    <property type="match status" value="1"/>
</dbReference>
<dbReference type="PANTHER" id="PTHR11246">
    <property type="entry name" value="PRE-MRNA SPLICING FACTOR"/>
    <property type="match status" value="1"/>
</dbReference>
<dbReference type="Pfam" id="PF23231">
    <property type="entry name" value="HAT_Syf1_CNRKL1_C"/>
    <property type="match status" value="1"/>
</dbReference>
<dbReference type="Pfam" id="PF23233">
    <property type="entry name" value="HAT_Syf1_CNRKL1_N"/>
    <property type="match status" value="1"/>
</dbReference>
<dbReference type="SMART" id="SM00386">
    <property type="entry name" value="HAT"/>
    <property type="match status" value="14"/>
</dbReference>
<dbReference type="SUPFAM" id="SSF48452">
    <property type="entry name" value="TPR-like"/>
    <property type="match status" value="1"/>
</dbReference>
<protein>
    <recommendedName>
        <fullName>Pre-mRNA-splicing factor CLF1</fullName>
    </recommendedName>
</protein>
<proteinExistence type="inferred from homology"/>
<reference key="1">
    <citation type="journal article" date="2005" name="Science">
        <title>The genome of the basidiomycetous yeast and human pathogen Cryptococcus neoformans.</title>
        <authorList>
            <person name="Loftus B.J."/>
            <person name="Fung E."/>
            <person name="Roncaglia P."/>
            <person name="Rowley D."/>
            <person name="Amedeo P."/>
            <person name="Bruno D."/>
            <person name="Vamathevan J."/>
            <person name="Miranda M."/>
            <person name="Anderson I.J."/>
            <person name="Fraser J.A."/>
            <person name="Allen J.E."/>
            <person name="Bosdet I.E."/>
            <person name="Brent M.R."/>
            <person name="Chiu R."/>
            <person name="Doering T.L."/>
            <person name="Donlin M.J."/>
            <person name="D'Souza C.A."/>
            <person name="Fox D.S."/>
            <person name="Grinberg V."/>
            <person name="Fu J."/>
            <person name="Fukushima M."/>
            <person name="Haas B.J."/>
            <person name="Huang J.C."/>
            <person name="Janbon G."/>
            <person name="Jones S.J.M."/>
            <person name="Koo H.L."/>
            <person name="Krzywinski M.I."/>
            <person name="Kwon-Chung K.J."/>
            <person name="Lengeler K.B."/>
            <person name="Maiti R."/>
            <person name="Marra M.A."/>
            <person name="Marra R.E."/>
            <person name="Mathewson C.A."/>
            <person name="Mitchell T.G."/>
            <person name="Pertea M."/>
            <person name="Riggs F.R."/>
            <person name="Salzberg S.L."/>
            <person name="Schein J.E."/>
            <person name="Shvartsbeyn A."/>
            <person name="Shin H."/>
            <person name="Shumway M."/>
            <person name="Specht C.A."/>
            <person name="Suh B.B."/>
            <person name="Tenney A."/>
            <person name="Utterback T.R."/>
            <person name="Wickes B.L."/>
            <person name="Wortman J.R."/>
            <person name="Wye N.H."/>
            <person name="Kronstad J.W."/>
            <person name="Lodge J.K."/>
            <person name="Heitman J."/>
            <person name="Davis R.W."/>
            <person name="Fraser C.M."/>
            <person name="Hyman R.W."/>
        </authorList>
    </citation>
    <scope>NUCLEOTIDE SEQUENCE [LARGE SCALE GENOMIC DNA]</scope>
    <source>
        <strain>B-3501A</strain>
    </source>
</reference>
<accession>P0CO11</accession>
<accession>Q55Z33</accession>
<accession>Q5KNE9</accession>
<evidence type="ECO:0000250" key="1"/>
<evidence type="ECO:0000256" key="2">
    <source>
        <dbReference type="SAM" id="MobiDB-lite"/>
    </source>
</evidence>
<evidence type="ECO:0000305" key="3"/>
<gene>
    <name type="primary">CLF1</name>
    <name type="ordered locus">CNBA6540</name>
</gene>
<sequence>MAGRDPRDRAPRVRNRAPAAVQITAEQLLREAQERQEPAIQAPKQRVQDLEELSEFQARKRTEFESRIRYSRDSILAWTKYAQWEASQNEYERSRSVFERALDVDPRSVDLWIKYTDMELKARNINHARNLFDRAITLLPRVDALWYKYVYLEELLLNVSGARQIFERWMQWEPNDKAWQSYIKLEERYNELDRASAIYERWIACRPIPKNWVTWAKFEEDRGQPDKAREVFQTALEFFGDEEEQVEKAQSVFAAFARMETRLKEFERARVIYKFALARLPRSKSASLYAQYTKFEKQHGDRAGVELTVLGKRRIQYEEELAYDPTNYDAWFSLARLEEDAYRADREDGEDVEPMRVREVYERAVANVPPALEKRYWRRYIYLWLQYAAFEEIDTKDYDRARDVYKAAVKLVPHKTFTFAKLWLAYAYFEIRRLDVSAARKVLGAGIGMCPKPKLFTGYIELEMRLREFDRVRTLYEKFLTYDPSLSSAWIQWTQVESAVEDFERVRAIFELAVQQSLDMPEIVWKAYIDFEAGEGERERARNLYERLLERTSHVKVWISYALMEIATLGGGEDEDGNEIEGEAGDADLARQVFERGYKDLRAKGEKEDRAVLLESWKSFEQEHGDEETLAKVEDMLPTTRKRWRKAEDGSGELEEYWDLVFPDDEREANPTSFKFFQAAQAWAQQRAGQGEEGGLSYDLPSDSEDENEDGDEDGDGREEEGMDQD</sequence>
<keyword id="KW-0507">mRNA processing</keyword>
<keyword id="KW-0508">mRNA splicing</keyword>
<keyword id="KW-0539">Nucleus</keyword>
<keyword id="KW-0677">Repeat</keyword>
<keyword id="KW-0747">Spliceosome</keyword>
<organism>
    <name type="scientific">Cryptococcus neoformans var. neoformans serotype D (strain B-3501A)</name>
    <name type="common">Filobasidiella neoformans</name>
    <dbReference type="NCBI Taxonomy" id="283643"/>
    <lineage>
        <taxon>Eukaryota</taxon>
        <taxon>Fungi</taxon>
        <taxon>Dikarya</taxon>
        <taxon>Basidiomycota</taxon>
        <taxon>Agaricomycotina</taxon>
        <taxon>Tremellomycetes</taxon>
        <taxon>Tremellales</taxon>
        <taxon>Cryptococcaceae</taxon>
        <taxon>Cryptococcus</taxon>
        <taxon>Cryptococcus neoformans species complex</taxon>
    </lineage>
</organism>
<comment type="function">
    <text evidence="1">Involved in pre-mRNA splicing and cell cycle progression. Required for the spliceosome assembly and initiation of the DNA replication (By similarity).</text>
</comment>
<comment type="subunit">
    <text evidence="1">Associated with the spliceosome.</text>
</comment>
<comment type="subcellular location">
    <subcellularLocation>
        <location evidence="1">Nucleus</location>
    </subcellularLocation>
</comment>
<comment type="similarity">
    <text evidence="3">Belongs to the crooked-neck family.</text>
</comment>